<organism>
    <name type="scientific">Salmonella dublin (strain CT_02021853)</name>
    <dbReference type="NCBI Taxonomy" id="439851"/>
    <lineage>
        <taxon>Bacteria</taxon>
        <taxon>Pseudomonadati</taxon>
        <taxon>Pseudomonadota</taxon>
        <taxon>Gammaproteobacteria</taxon>
        <taxon>Enterobacterales</taxon>
        <taxon>Enterobacteriaceae</taxon>
        <taxon>Salmonella</taxon>
    </lineage>
</organism>
<proteinExistence type="inferred from homology"/>
<accession>B5FHZ3</accession>
<protein>
    <recommendedName>
        <fullName evidence="1">UPF0102 protein YraN</fullName>
    </recommendedName>
</protein>
<reference key="1">
    <citation type="journal article" date="2011" name="J. Bacteriol.">
        <title>Comparative genomics of 28 Salmonella enterica isolates: evidence for CRISPR-mediated adaptive sublineage evolution.</title>
        <authorList>
            <person name="Fricke W.F."/>
            <person name="Mammel M.K."/>
            <person name="McDermott P.F."/>
            <person name="Tartera C."/>
            <person name="White D.G."/>
            <person name="Leclerc J.E."/>
            <person name="Ravel J."/>
            <person name="Cebula T.A."/>
        </authorList>
    </citation>
    <scope>NUCLEOTIDE SEQUENCE [LARGE SCALE GENOMIC DNA]</scope>
    <source>
        <strain>CT_02021853</strain>
    </source>
</reference>
<sequence>MAQIPARGDCSRQLTRKQAGDAWEAAARRWLESKGLRFIAANVRERGGEIDLIMRDGKTTVFVEVRYRRSGLYGGAAASVTRSKQHKLLHTARLWLARQNGSFDTVDCRFDVLAFTGNEIEWFRDAFNDHS</sequence>
<gene>
    <name evidence="1" type="primary">yraN</name>
    <name type="ordered locus">SeD_A3620</name>
</gene>
<dbReference type="EMBL" id="CP001144">
    <property type="protein sequence ID" value="ACH77599.1"/>
    <property type="molecule type" value="Genomic_DNA"/>
</dbReference>
<dbReference type="RefSeq" id="WP_000057285.1">
    <property type="nucleotide sequence ID" value="NC_011205.1"/>
</dbReference>
<dbReference type="SMR" id="B5FHZ3"/>
<dbReference type="KEGG" id="sed:SeD_A3620"/>
<dbReference type="HOGENOM" id="CLU_115353_1_0_6"/>
<dbReference type="Proteomes" id="UP000008322">
    <property type="component" value="Chromosome"/>
</dbReference>
<dbReference type="GO" id="GO:0003676">
    <property type="term" value="F:nucleic acid binding"/>
    <property type="evidence" value="ECO:0007669"/>
    <property type="project" value="InterPro"/>
</dbReference>
<dbReference type="CDD" id="cd20736">
    <property type="entry name" value="PoNe_Nuclease"/>
    <property type="match status" value="1"/>
</dbReference>
<dbReference type="Gene3D" id="3.40.1350.10">
    <property type="match status" value="1"/>
</dbReference>
<dbReference type="HAMAP" id="MF_00048">
    <property type="entry name" value="UPF0102"/>
    <property type="match status" value="1"/>
</dbReference>
<dbReference type="InterPro" id="IPR011335">
    <property type="entry name" value="Restrct_endonuc-II-like"/>
</dbReference>
<dbReference type="InterPro" id="IPR011856">
    <property type="entry name" value="tRNA_endonuc-like_dom_sf"/>
</dbReference>
<dbReference type="InterPro" id="IPR003509">
    <property type="entry name" value="UPF0102_YraN-like"/>
</dbReference>
<dbReference type="NCBIfam" id="NF009150">
    <property type="entry name" value="PRK12497.1-3"/>
    <property type="match status" value="1"/>
</dbReference>
<dbReference type="NCBIfam" id="TIGR00252">
    <property type="entry name" value="YraN family protein"/>
    <property type="match status" value="1"/>
</dbReference>
<dbReference type="PANTHER" id="PTHR34039">
    <property type="entry name" value="UPF0102 PROTEIN YRAN"/>
    <property type="match status" value="1"/>
</dbReference>
<dbReference type="PANTHER" id="PTHR34039:SF1">
    <property type="entry name" value="UPF0102 PROTEIN YRAN"/>
    <property type="match status" value="1"/>
</dbReference>
<dbReference type="Pfam" id="PF02021">
    <property type="entry name" value="UPF0102"/>
    <property type="match status" value="1"/>
</dbReference>
<dbReference type="SUPFAM" id="SSF52980">
    <property type="entry name" value="Restriction endonuclease-like"/>
    <property type="match status" value="1"/>
</dbReference>
<comment type="similarity">
    <text evidence="1">Belongs to the UPF0102 family.</text>
</comment>
<evidence type="ECO:0000255" key="1">
    <source>
        <dbReference type="HAMAP-Rule" id="MF_00048"/>
    </source>
</evidence>
<feature type="chain" id="PRO_1000091258" description="UPF0102 protein YraN">
    <location>
        <begin position="1"/>
        <end position="131"/>
    </location>
</feature>
<name>YRAN_SALDC</name>